<reference key="1">
    <citation type="journal article" date="1990" name="Proc. Natl. Acad. Sci. U.S.A.">
        <title>Nucleotide sequence and promoter analysis of SPO13, a meiosis-specific gene of Saccharomyces cerevisiae.</title>
        <authorList>
            <person name="Buckingham L.E."/>
            <person name="Wang H.T."/>
            <person name="Elder R.T."/>
            <person name="McCarroll R.M."/>
            <person name="Slater M.R."/>
            <person name="Esposito R.E."/>
        </authorList>
    </citation>
    <scope>NUCLEOTIDE SEQUENCE [GENOMIC DNA]</scope>
    <scope>FUNCTION</scope>
</reference>
<reference key="2">
    <citation type="journal article" date="1994" name="Science">
        <title>Complete nucleotide sequence of Saccharomyces cerevisiae chromosome VIII.</title>
        <authorList>
            <person name="Johnston M."/>
            <person name="Andrews S."/>
            <person name="Brinkman R."/>
            <person name="Cooper J."/>
            <person name="Ding H."/>
            <person name="Dover J."/>
            <person name="Du Z."/>
            <person name="Favello A."/>
            <person name="Fulton L."/>
            <person name="Gattung S."/>
            <person name="Geisel C."/>
            <person name="Kirsten J."/>
            <person name="Kucaba T."/>
            <person name="Hillier L.W."/>
            <person name="Jier M."/>
            <person name="Johnston L."/>
            <person name="Langston Y."/>
            <person name="Latreille P."/>
            <person name="Louis E.J."/>
            <person name="Macri C."/>
            <person name="Mardis E."/>
            <person name="Menezes S."/>
            <person name="Mouser L."/>
            <person name="Nhan M."/>
            <person name="Rifkin L."/>
            <person name="Riles L."/>
            <person name="St Peter H."/>
            <person name="Trevaskis E."/>
            <person name="Vaughan K."/>
            <person name="Vignati D."/>
            <person name="Wilcox L."/>
            <person name="Wohldman P."/>
            <person name="Waterston R."/>
            <person name="Wilson R."/>
            <person name="Vaudin M."/>
        </authorList>
    </citation>
    <scope>NUCLEOTIDE SEQUENCE [LARGE SCALE GENOMIC DNA]</scope>
    <source>
        <strain>ATCC 204508 / S288c</strain>
    </source>
</reference>
<reference key="3">
    <citation type="journal article" date="2014" name="G3 (Bethesda)">
        <title>The reference genome sequence of Saccharomyces cerevisiae: Then and now.</title>
        <authorList>
            <person name="Engel S.R."/>
            <person name="Dietrich F.S."/>
            <person name="Fisk D.G."/>
            <person name="Binkley G."/>
            <person name="Balakrishnan R."/>
            <person name="Costanzo M.C."/>
            <person name="Dwight S.S."/>
            <person name="Hitz B.C."/>
            <person name="Karra K."/>
            <person name="Nash R.S."/>
            <person name="Weng S."/>
            <person name="Wong E.D."/>
            <person name="Lloyd P."/>
            <person name="Skrzypek M.S."/>
            <person name="Miyasato S.R."/>
            <person name="Simison M."/>
            <person name="Cherry J.M."/>
        </authorList>
    </citation>
    <scope>GENOME REANNOTATION</scope>
    <source>
        <strain>ATCC 204508 / S288c</strain>
    </source>
</reference>
<reference key="4">
    <citation type="journal article" date="2007" name="Genome Res.">
        <title>Approaching a complete repository of sequence-verified protein-encoding clones for Saccharomyces cerevisiae.</title>
        <authorList>
            <person name="Hu Y."/>
            <person name="Rolfs A."/>
            <person name="Bhullar B."/>
            <person name="Murthy T.V.S."/>
            <person name="Zhu C."/>
            <person name="Berger M.F."/>
            <person name="Camargo A.A."/>
            <person name="Kelley F."/>
            <person name="McCarron S."/>
            <person name="Jepson D."/>
            <person name="Richardson A."/>
            <person name="Raphael J."/>
            <person name="Moreira D."/>
            <person name="Taycher E."/>
            <person name="Zuo D."/>
            <person name="Mohr S."/>
            <person name="Kane M.F."/>
            <person name="Williamson J."/>
            <person name="Simpson A.J.G."/>
            <person name="Bulyk M.L."/>
            <person name="Harlow E."/>
            <person name="Marsischky G."/>
            <person name="Kolodner R.D."/>
            <person name="LaBaer J."/>
        </authorList>
    </citation>
    <scope>NUCLEOTIDE SEQUENCE [GENOMIC DNA]</scope>
    <source>
        <strain>ATCC 204508 / S288c</strain>
    </source>
</reference>
<reference key="5">
    <citation type="journal article" date="2015" name="Nature">
        <title>Meikin is a conserved regulator of meiosis-I-specific kinetochore function.</title>
        <authorList>
            <person name="Kim J."/>
            <person name="Ishiguro K."/>
            <person name="Nambu A."/>
            <person name="Akiyoshi B."/>
            <person name="Yokobayashi S."/>
            <person name="Kagami A."/>
            <person name="Ishiguro T."/>
            <person name="Pendas A.M."/>
            <person name="Takeda N."/>
            <person name="Sakakibara Y."/>
            <person name="Kitajima T.S."/>
            <person name="Tanno Y."/>
            <person name="Sakuno T."/>
            <person name="Watanabe Y."/>
        </authorList>
    </citation>
    <scope>FUNCTION</scope>
</reference>
<organism>
    <name type="scientific">Saccharomyces cerevisiae (strain ATCC 204508 / S288c)</name>
    <name type="common">Baker's yeast</name>
    <dbReference type="NCBI Taxonomy" id="559292"/>
    <lineage>
        <taxon>Eukaryota</taxon>
        <taxon>Fungi</taxon>
        <taxon>Dikarya</taxon>
        <taxon>Ascomycota</taxon>
        <taxon>Saccharomycotina</taxon>
        <taxon>Saccharomycetes</taxon>
        <taxon>Saccharomycetales</taxon>
        <taxon>Saccharomycetaceae</taxon>
        <taxon>Saccharomyces</taxon>
    </lineage>
</organism>
<proteinExistence type="evidence at protein level"/>
<feature type="chain" id="PRO_0000072134" description="Meiosis-specific protein SPO13">
    <location>
        <begin position="1"/>
        <end position="291"/>
    </location>
</feature>
<feature type="region of interest" description="Disordered" evidence="2">
    <location>
        <begin position="1"/>
        <end position="30"/>
    </location>
</feature>
<feature type="region of interest" description="Disordered" evidence="2">
    <location>
        <begin position="116"/>
        <end position="143"/>
    </location>
</feature>
<feature type="region of interest" description="Disordered" evidence="2">
    <location>
        <begin position="271"/>
        <end position="291"/>
    </location>
</feature>
<feature type="short sequence motif" description="Nuclear localization signal" evidence="1">
    <location>
        <begin position="3"/>
        <end position="6"/>
    </location>
</feature>
<feature type="compositionally biased region" description="Basic and acidic residues" evidence="2">
    <location>
        <begin position="116"/>
        <end position="125"/>
    </location>
</feature>
<feature type="compositionally biased region" description="Polar residues" evidence="2">
    <location>
        <begin position="130"/>
        <end position="143"/>
    </location>
</feature>
<gene>
    <name type="primary">SPO13</name>
    <name type="ordered locus">YHR014W</name>
</gene>
<dbReference type="EMBL" id="M38357">
    <property type="protein sequence ID" value="AAA35071.1"/>
    <property type="molecule type" value="Genomic_DNA"/>
</dbReference>
<dbReference type="EMBL" id="U10400">
    <property type="protein sequence ID" value="AAB68941.1"/>
    <property type="molecule type" value="Genomic_DNA"/>
</dbReference>
<dbReference type="EMBL" id="AY557825">
    <property type="protein sequence ID" value="AAS56151.1"/>
    <property type="molecule type" value="Genomic_DNA"/>
</dbReference>
<dbReference type="EMBL" id="BK006934">
    <property type="protein sequence ID" value="DAA06703.1"/>
    <property type="molecule type" value="Genomic_DNA"/>
</dbReference>
<dbReference type="PIR" id="A38426">
    <property type="entry name" value="A38426"/>
</dbReference>
<dbReference type="RefSeq" id="NP_011878.1">
    <property type="nucleotide sequence ID" value="NM_001179144.1"/>
</dbReference>
<dbReference type="BioGRID" id="36441">
    <property type="interactions" value="95"/>
</dbReference>
<dbReference type="DIP" id="DIP-1655N"/>
<dbReference type="FunCoup" id="P23624">
    <property type="interactions" value="75"/>
</dbReference>
<dbReference type="IntAct" id="P23624">
    <property type="interactions" value="8"/>
</dbReference>
<dbReference type="MINT" id="P23624"/>
<dbReference type="STRING" id="4932.YHR014W"/>
<dbReference type="iPTMnet" id="P23624"/>
<dbReference type="PaxDb" id="4932-YHR014W"/>
<dbReference type="PeptideAtlas" id="P23624"/>
<dbReference type="EnsemblFungi" id="YHR014W_mRNA">
    <property type="protein sequence ID" value="YHR014W"/>
    <property type="gene ID" value="YHR014W"/>
</dbReference>
<dbReference type="GeneID" id="856405"/>
<dbReference type="KEGG" id="sce:YHR014W"/>
<dbReference type="AGR" id="SGD:S000001056"/>
<dbReference type="SGD" id="S000001056">
    <property type="gene designation" value="SPO13"/>
</dbReference>
<dbReference type="VEuPathDB" id="FungiDB:YHR014W"/>
<dbReference type="HOGENOM" id="CLU_956961_0_0_1"/>
<dbReference type="InParanoid" id="P23624"/>
<dbReference type="OMA" id="NDSESXL"/>
<dbReference type="OrthoDB" id="4035583at2759"/>
<dbReference type="BioCyc" id="YEAST:G3O-31076-MONOMER"/>
<dbReference type="BioGRID-ORCS" id="856405">
    <property type="hits" value="0 hits in 10 CRISPR screens"/>
</dbReference>
<dbReference type="CD-CODE" id="876000F7">
    <property type="entry name" value="Centrosome"/>
</dbReference>
<dbReference type="PRO" id="PR:P23624"/>
<dbReference type="Proteomes" id="UP000002311">
    <property type="component" value="Chromosome VIII"/>
</dbReference>
<dbReference type="RNAct" id="P23624">
    <property type="molecule type" value="protein"/>
</dbReference>
<dbReference type="GO" id="GO:0000779">
    <property type="term" value="C:condensed chromosome, centromeric region"/>
    <property type="evidence" value="ECO:0000314"/>
    <property type="project" value="SGD"/>
</dbReference>
<dbReference type="GO" id="GO:0072687">
    <property type="term" value="C:meiotic spindle"/>
    <property type="evidence" value="ECO:0000314"/>
    <property type="project" value="SGD"/>
</dbReference>
<dbReference type="GO" id="GO:0005634">
    <property type="term" value="C:nucleus"/>
    <property type="evidence" value="ECO:0000314"/>
    <property type="project" value="SGD"/>
</dbReference>
<dbReference type="GO" id="GO:0051321">
    <property type="term" value="P:meiotic cell cycle"/>
    <property type="evidence" value="ECO:0007669"/>
    <property type="project" value="UniProtKB-KW"/>
</dbReference>
<dbReference type="GO" id="GO:0051177">
    <property type="term" value="P:meiotic sister chromatid cohesion"/>
    <property type="evidence" value="ECO:0000315"/>
    <property type="project" value="SGD"/>
</dbReference>
<dbReference type="GO" id="GO:0045876">
    <property type="term" value="P:positive regulation of sister chromatid cohesion"/>
    <property type="evidence" value="ECO:0000315"/>
    <property type="project" value="SGD"/>
</dbReference>
<dbReference type="GO" id="GO:0071459">
    <property type="term" value="P:protein localization to chromosome, centromeric region"/>
    <property type="evidence" value="ECO:0000315"/>
    <property type="project" value="SGD"/>
</dbReference>
<dbReference type="GO" id="GO:0030435">
    <property type="term" value="P:sporulation resulting in formation of a cellular spore"/>
    <property type="evidence" value="ECO:0007669"/>
    <property type="project" value="UniProtKB-KW"/>
</dbReference>
<evidence type="ECO:0000255" key="1"/>
<evidence type="ECO:0000256" key="2">
    <source>
        <dbReference type="SAM" id="MobiDB-lite"/>
    </source>
</evidence>
<evidence type="ECO:0000269" key="3">
    <source>
    </source>
</evidence>
<evidence type="ECO:0000305" key="4"/>
<evidence type="ECO:0000305" key="5">
    <source>
    </source>
</evidence>
<sequence length="291" mass="33295">MAPRKRFRLLELGSPTHSKRKVQKPLQEKTPNLRVSPLAFKIGKEIKNKEIRKTKKTESENIFNSKHVDLRLESPHPGLNFVSDAQQYSKAGDVRYLKNKSSNTLKNERQTIERPSFDNSLRFEDIEQPPKSTSTPVLSQSSQINVEREAPMFPVPYYIAPSPMYNFSPYQNFVGNPTFLTPSHNPNLNYAIPIQRPELLYPNVNVYDSPLFKKTRLPHQTKSLDKEKNYQYLPIYPVSISNNGDFVGQETPRAAPKLSKKRLSNTLDVNCSDYESSGQNATYNDSESSLN</sequence>
<name>SPO13_YEAST</name>
<protein>
    <recommendedName>
        <fullName>Meiosis-specific protein SPO13</fullName>
    </recommendedName>
    <alternativeName>
        <fullName>Sporulation-specific protein 13</fullName>
    </alternativeName>
</protein>
<comment type="function">
    <text evidence="3 5">Required for meiosis I segmentation (PubMed:2123556). Probably acts as a regulator of kinetochore function during meiosis I: required both for mono-orientation of kinetochores on sister chromosomes and protection of centromeric cohesin from separase-mediated cleavage (PubMed:25533956).</text>
</comment>
<comment type="interaction">
    <interactant intactId="EBI-17719">
        <id>P23624</id>
    </interactant>
    <interactant intactId="EBI-4440">
        <id>P32562</id>
        <label>CDC5</label>
    </interactant>
    <organismsDiffer>false</organismsDiffer>
    <experiments>8</experiments>
</comment>
<comment type="subcellular location">
    <subcellularLocation>
        <location evidence="4">Nucleus</location>
    </subcellularLocation>
</comment>
<keyword id="KW-0469">Meiosis</keyword>
<keyword id="KW-0539">Nucleus</keyword>
<keyword id="KW-1185">Reference proteome</keyword>
<keyword id="KW-0749">Sporulation</keyword>
<accession>P23624</accession>
<accession>D3DKV9</accession>